<comment type="function">
    <text evidence="1">Responsible for the transport of dicarboxylates such as succinate, fumarate, and malate from the periplasm across the membrane.</text>
</comment>
<comment type="subcellular location">
    <subcellularLocation>
        <location evidence="1">Cell inner membrane</location>
        <topology evidence="1">Multi-pass membrane protein</topology>
    </subcellularLocation>
</comment>
<comment type="similarity">
    <text evidence="1">Belongs to the dicarboxylate/amino acid:cation symporter (DAACS) (TC 2.A.23) family.</text>
</comment>
<feature type="chain" id="PRO_0000321991" description="C4-dicarboxylate transport protein 2">
    <location>
        <begin position="1"/>
        <end position="436"/>
    </location>
</feature>
<feature type="transmembrane region" description="Helical" evidence="1">
    <location>
        <begin position="14"/>
        <end position="34"/>
    </location>
</feature>
<feature type="transmembrane region" description="Helical" evidence="1">
    <location>
        <begin position="45"/>
        <end position="65"/>
    </location>
</feature>
<feature type="transmembrane region" description="Helical" evidence="1">
    <location>
        <begin position="77"/>
        <end position="97"/>
    </location>
</feature>
<feature type="transmembrane region" description="Helical" evidence="1">
    <location>
        <begin position="142"/>
        <end position="162"/>
    </location>
</feature>
<feature type="transmembrane region" description="Helical" evidence="1">
    <location>
        <begin position="198"/>
        <end position="218"/>
    </location>
</feature>
<feature type="transmembrane region" description="Helical" evidence="1">
    <location>
        <begin position="223"/>
        <end position="243"/>
    </location>
</feature>
<feature type="transmembrane region" description="Helical" evidence="1">
    <location>
        <begin position="290"/>
        <end position="310"/>
    </location>
</feature>
<feature type="transmembrane region" description="Helical" evidence="1">
    <location>
        <begin position="331"/>
        <end position="351"/>
    </location>
</feature>
<feature type="transmembrane region" description="Helical" evidence="1">
    <location>
        <begin position="353"/>
        <end position="373"/>
    </location>
</feature>
<feature type="region of interest" description="Disordered" evidence="2">
    <location>
        <begin position="414"/>
        <end position="436"/>
    </location>
</feature>
<gene>
    <name evidence="1" type="primary">dctA2</name>
    <name type="ordered locus">PSPA7_4196</name>
</gene>
<name>DCTA2_PSEP7</name>
<dbReference type="EMBL" id="CP000744">
    <property type="protein sequence ID" value="ABR86738.1"/>
    <property type="molecule type" value="Genomic_DNA"/>
</dbReference>
<dbReference type="RefSeq" id="WP_012076662.1">
    <property type="nucleotide sequence ID" value="NC_009656.1"/>
</dbReference>
<dbReference type="SMR" id="A6V915"/>
<dbReference type="GeneID" id="77222228"/>
<dbReference type="KEGG" id="pap:PSPA7_4196"/>
<dbReference type="HOGENOM" id="CLU_019375_7_0_6"/>
<dbReference type="Proteomes" id="UP000001582">
    <property type="component" value="Chromosome"/>
</dbReference>
<dbReference type="GO" id="GO:0005886">
    <property type="term" value="C:plasma membrane"/>
    <property type="evidence" value="ECO:0007669"/>
    <property type="project" value="UniProtKB-SubCell"/>
</dbReference>
<dbReference type="GO" id="GO:0015138">
    <property type="term" value="F:fumarate transmembrane transporter activity"/>
    <property type="evidence" value="ECO:0007669"/>
    <property type="project" value="TreeGrafter"/>
</dbReference>
<dbReference type="GO" id="GO:0015366">
    <property type="term" value="F:malate:proton symporter activity"/>
    <property type="evidence" value="ECO:0007669"/>
    <property type="project" value="TreeGrafter"/>
</dbReference>
<dbReference type="GO" id="GO:0015141">
    <property type="term" value="F:succinate transmembrane transporter activity"/>
    <property type="evidence" value="ECO:0007669"/>
    <property type="project" value="TreeGrafter"/>
</dbReference>
<dbReference type="GO" id="GO:0070778">
    <property type="term" value="P:L-aspartate transmembrane transport"/>
    <property type="evidence" value="ECO:0007669"/>
    <property type="project" value="TreeGrafter"/>
</dbReference>
<dbReference type="FunFam" id="1.10.3860.10:FF:000001">
    <property type="entry name" value="C4-dicarboxylate transport protein"/>
    <property type="match status" value="1"/>
</dbReference>
<dbReference type="Gene3D" id="1.10.3860.10">
    <property type="entry name" value="Sodium:dicarboxylate symporter"/>
    <property type="match status" value="1"/>
</dbReference>
<dbReference type="HAMAP" id="MF_01300">
    <property type="entry name" value="C4_dicarb_transport"/>
    <property type="match status" value="1"/>
</dbReference>
<dbReference type="InterPro" id="IPR023954">
    <property type="entry name" value="C4_dicarb_transport"/>
</dbReference>
<dbReference type="InterPro" id="IPR001991">
    <property type="entry name" value="Na-dicarboxylate_symporter"/>
</dbReference>
<dbReference type="InterPro" id="IPR018107">
    <property type="entry name" value="Na-dicarboxylate_symporter_CS"/>
</dbReference>
<dbReference type="InterPro" id="IPR036458">
    <property type="entry name" value="Na:dicarbo_symporter_sf"/>
</dbReference>
<dbReference type="NCBIfam" id="NF002461">
    <property type="entry name" value="PRK01663.1"/>
    <property type="match status" value="1"/>
</dbReference>
<dbReference type="NCBIfam" id="NF009587">
    <property type="entry name" value="PRK13027.1"/>
    <property type="match status" value="1"/>
</dbReference>
<dbReference type="PANTHER" id="PTHR42865:SF1">
    <property type="entry name" value="AEROBIC C4-DICARBOXYLATE TRANSPORT PROTEIN"/>
    <property type="match status" value="1"/>
</dbReference>
<dbReference type="PANTHER" id="PTHR42865">
    <property type="entry name" value="PROTON/GLUTAMATE-ASPARTATE SYMPORTER"/>
    <property type="match status" value="1"/>
</dbReference>
<dbReference type="Pfam" id="PF00375">
    <property type="entry name" value="SDF"/>
    <property type="match status" value="1"/>
</dbReference>
<dbReference type="PRINTS" id="PR00173">
    <property type="entry name" value="EDTRNSPORT"/>
</dbReference>
<dbReference type="SUPFAM" id="SSF118215">
    <property type="entry name" value="Proton glutamate symport protein"/>
    <property type="match status" value="1"/>
</dbReference>
<dbReference type="PROSITE" id="PS00714">
    <property type="entry name" value="NA_DICARBOXYL_SYMP_2"/>
    <property type="match status" value="1"/>
</dbReference>
<proteinExistence type="inferred from homology"/>
<sequence length="436" mass="46022">MTKQPFYKSLYVQVLVAIAIGIALGHWYPETAVAMKPFGDGFVKLIKMAIAPIIFCTVVTGIAGMQSMKSVGKTGGMALLYFEIVSTVALIIGLVVVNLVQPGAGMHVDPNTLDTSKIAAYAAAGEKQSTVDFLMNVIPGTVVGAFANGDILQVLFFSVLFGYALHRLGSYGKPVFEFIERVSHVMFNIINVIMKVAPIGAFGAMAFTIGAYGVGSLVQLGQLMLCFYITCLLFVLIVLGGIARAHGFSILRFIRYIREELLIVLGTSSSESALPRMIDKMEKLGCNKSVVGLVIPTGYSFNLDGTSIYLTMAAVFIAQATDTPMDITHQITLLLVLLIASKGAAGVTGSGFIVLAATLSAVGHLPVAGLALILGIDRFMSEARALTNLVGNGVATVVVSKWCKQLDEGTLQRELAGEGNASSPASDIPVGGREAV</sequence>
<accession>A6V915</accession>
<evidence type="ECO:0000255" key="1">
    <source>
        <dbReference type="HAMAP-Rule" id="MF_01300"/>
    </source>
</evidence>
<evidence type="ECO:0000256" key="2">
    <source>
        <dbReference type="SAM" id="MobiDB-lite"/>
    </source>
</evidence>
<reference key="1">
    <citation type="submission" date="2007-06" db="EMBL/GenBank/DDBJ databases">
        <authorList>
            <person name="Dodson R.J."/>
            <person name="Harkins D."/>
            <person name="Paulsen I.T."/>
        </authorList>
    </citation>
    <scope>NUCLEOTIDE SEQUENCE [LARGE SCALE GENOMIC DNA]</scope>
    <source>
        <strain>DSM 24068 / PA7</strain>
    </source>
</reference>
<keyword id="KW-0997">Cell inner membrane</keyword>
<keyword id="KW-1003">Cell membrane</keyword>
<keyword id="KW-0472">Membrane</keyword>
<keyword id="KW-0769">Symport</keyword>
<keyword id="KW-0812">Transmembrane</keyword>
<keyword id="KW-1133">Transmembrane helix</keyword>
<keyword id="KW-0813">Transport</keyword>
<organism>
    <name type="scientific">Pseudomonas paraeruginosa (strain DSM 24068 / PA7)</name>
    <name type="common">Pseudomonas aeruginosa (strain PA7)</name>
    <dbReference type="NCBI Taxonomy" id="381754"/>
    <lineage>
        <taxon>Bacteria</taxon>
        <taxon>Pseudomonadati</taxon>
        <taxon>Pseudomonadota</taxon>
        <taxon>Gammaproteobacteria</taxon>
        <taxon>Pseudomonadales</taxon>
        <taxon>Pseudomonadaceae</taxon>
        <taxon>Pseudomonas</taxon>
        <taxon>Pseudomonas paraeruginosa</taxon>
    </lineage>
</organism>
<protein>
    <recommendedName>
        <fullName evidence="1">C4-dicarboxylate transport protein 2</fullName>
    </recommendedName>
</protein>